<dbReference type="EMBL" id="X51521">
    <property type="protein sequence ID" value="CAA35893.1"/>
    <property type="molecule type" value="mRNA"/>
</dbReference>
<dbReference type="EMBL" id="J05021">
    <property type="protein sequence ID" value="AAA61278.1"/>
    <property type="status" value="ALT_INIT"/>
    <property type="molecule type" value="mRNA"/>
</dbReference>
<dbReference type="EMBL" id="AL162086">
    <property type="protein sequence ID" value="CAB82418.1"/>
    <property type="status" value="ALT_INIT"/>
    <property type="molecule type" value="mRNA"/>
</dbReference>
<dbReference type="EMBL" id="AL589931">
    <property type="status" value="NOT_ANNOTATED_CDS"/>
    <property type="molecule type" value="Genomic_DNA"/>
</dbReference>
<dbReference type="EMBL" id="CH471051">
    <property type="protein sequence ID" value="EAW47647.1"/>
    <property type="molecule type" value="Genomic_DNA"/>
</dbReference>
<dbReference type="EMBL" id="BC013903">
    <property type="protein sequence ID" value="AAH13903.1"/>
    <property type="molecule type" value="mRNA"/>
</dbReference>
<dbReference type="CCDS" id="CCDS5258.1"/>
<dbReference type="PIR" id="A34400">
    <property type="entry name" value="A34400"/>
</dbReference>
<dbReference type="RefSeq" id="NP_001104547.1">
    <property type="nucleotide sequence ID" value="NM_001111077.2"/>
</dbReference>
<dbReference type="RefSeq" id="NP_003370.2">
    <property type="nucleotide sequence ID" value="NM_003379.4"/>
</dbReference>
<dbReference type="PDB" id="1NI2">
    <property type="method" value="X-ray"/>
    <property type="resolution" value="2.30 A"/>
    <property type="chains" value="A/B=2-297"/>
</dbReference>
<dbReference type="PDB" id="4RM8">
    <property type="method" value="X-ray"/>
    <property type="resolution" value="1.90 A"/>
    <property type="chains" value="A/B=1-586"/>
</dbReference>
<dbReference type="PDB" id="4RM9">
    <property type="method" value="X-ray"/>
    <property type="resolution" value="2.00 A"/>
    <property type="chains" value="A=1-586"/>
</dbReference>
<dbReference type="PDB" id="4RMA">
    <property type="method" value="X-ray"/>
    <property type="resolution" value="1.75 A"/>
    <property type="chains" value="A/B=1-296"/>
</dbReference>
<dbReference type="PDB" id="7T1K">
    <property type="method" value="X-ray"/>
    <property type="resolution" value="1.25 A"/>
    <property type="chains" value="B=475-481"/>
</dbReference>
<dbReference type="PDB" id="7T1L">
    <property type="method" value="X-ray"/>
    <property type="resolution" value="1.35 A"/>
    <property type="chains" value="C/D=475-481"/>
</dbReference>
<dbReference type="PDBsum" id="1NI2"/>
<dbReference type="PDBsum" id="4RM8"/>
<dbReference type="PDBsum" id="4RM9"/>
<dbReference type="PDBsum" id="4RMA"/>
<dbReference type="PDBsum" id="7T1K"/>
<dbReference type="PDBsum" id="7T1L"/>
<dbReference type="BMRB" id="P15311"/>
<dbReference type="SMR" id="P15311"/>
<dbReference type="BioGRID" id="113271">
    <property type="interactions" value="563"/>
</dbReference>
<dbReference type="CORUM" id="P15311"/>
<dbReference type="DIP" id="DIP-38868N"/>
<dbReference type="ELM" id="P15311"/>
<dbReference type="FunCoup" id="P15311">
    <property type="interactions" value="1630"/>
</dbReference>
<dbReference type="IntAct" id="P15311">
    <property type="interactions" value="271"/>
</dbReference>
<dbReference type="MINT" id="P15311"/>
<dbReference type="STRING" id="9606.ENSP00000338934"/>
<dbReference type="BindingDB" id="P15311"/>
<dbReference type="ChEMBL" id="CHEMBL1932896"/>
<dbReference type="GlyGen" id="P15311">
    <property type="glycosylation" value="5 sites, 1 O-linked glycan (4 sites)"/>
</dbReference>
<dbReference type="iPTMnet" id="P15311"/>
<dbReference type="MetOSite" id="P15311"/>
<dbReference type="PhosphoSitePlus" id="P15311"/>
<dbReference type="SwissPalm" id="P15311"/>
<dbReference type="BioMuta" id="EZR"/>
<dbReference type="DMDM" id="125987826"/>
<dbReference type="REPRODUCTION-2DPAGE" id="IPI00843975"/>
<dbReference type="CPTAC" id="CPTAC-1398"/>
<dbReference type="CPTAC" id="CPTAC-1399"/>
<dbReference type="CPTAC" id="CPTAC-1400"/>
<dbReference type="CPTAC" id="CPTAC-1401"/>
<dbReference type="CPTAC" id="CPTAC-1402"/>
<dbReference type="CPTAC" id="CPTAC-712"/>
<dbReference type="jPOST" id="P15311"/>
<dbReference type="MassIVE" id="P15311"/>
<dbReference type="PaxDb" id="9606-ENSP00000356042"/>
<dbReference type="PeptideAtlas" id="P15311"/>
<dbReference type="PRIDE" id="P15311"/>
<dbReference type="ProteomicsDB" id="53128"/>
<dbReference type="Pumba" id="P15311"/>
<dbReference type="TopDownProteomics" id="P15311"/>
<dbReference type="ABCD" id="P15311">
    <property type="antibodies" value="1 sequenced antibody"/>
</dbReference>
<dbReference type="Antibodypedia" id="3417">
    <property type="antibodies" value="1502 antibodies from 45 providers"/>
</dbReference>
<dbReference type="CPTC" id="P15311">
    <property type="antibodies" value="2 antibodies"/>
</dbReference>
<dbReference type="DNASU" id="7430"/>
<dbReference type="Ensembl" id="ENST00000337147.11">
    <property type="protein sequence ID" value="ENSP00000338934.7"/>
    <property type="gene ID" value="ENSG00000092820.19"/>
</dbReference>
<dbReference type="Ensembl" id="ENST00000367075.4">
    <property type="protein sequence ID" value="ENSP00000356042.3"/>
    <property type="gene ID" value="ENSG00000092820.19"/>
</dbReference>
<dbReference type="GeneID" id="7430"/>
<dbReference type="KEGG" id="hsa:7430"/>
<dbReference type="MANE-Select" id="ENST00000367075.4">
    <property type="protein sequence ID" value="ENSP00000356042.3"/>
    <property type="RefSeq nucleotide sequence ID" value="NM_001111077.2"/>
    <property type="RefSeq protein sequence ID" value="NP_001104547.1"/>
</dbReference>
<dbReference type="UCSC" id="uc003qrt.5">
    <property type="organism name" value="human"/>
</dbReference>
<dbReference type="AGR" id="HGNC:12691"/>
<dbReference type="CTD" id="7430"/>
<dbReference type="DisGeNET" id="7430"/>
<dbReference type="GeneCards" id="EZR"/>
<dbReference type="HGNC" id="HGNC:12691">
    <property type="gene designation" value="EZR"/>
</dbReference>
<dbReference type="HPA" id="ENSG00000092820">
    <property type="expression patterns" value="Low tissue specificity"/>
</dbReference>
<dbReference type="MalaCards" id="EZR"/>
<dbReference type="MIM" id="123900">
    <property type="type" value="gene"/>
</dbReference>
<dbReference type="neXtProt" id="NX_P15311"/>
<dbReference type="OpenTargets" id="ENSG00000092820"/>
<dbReference type="Orphanet" id="88616">
    <property type="disease" value="Autosomal recessive non-syndromic intellectual disability"/>
</dbReference>
<dbReference type="PharmGKB" id="PA162385512"/>
<dbReference type="VEuPathDB" id="HostDB:ENSG00000092820"/>
<dbReference type="eggNOG" id="KOG3529">
    <property type="taxonomic scope" value="Eukaryota"/>
</dbReference>
<dbReference type="GeneTree" id="ENSGT01090000260082"/>
<dbReference type="HOGENOM" id="CLU_003623_6_2_1"/>
<dbReference type="InParanoid" id="P15311"/>
<dbReference type="OMA" id="IYEKDDX"/>
<dbReference type="OrthoDB" id="6018897at2759"/>
<dbReference type="PAN-GO" id="P15311">
    <property type="GO annotations" value="11 GO annotations based on evolutionary models"/>
</dbReference>
<dbReference type="PhylomeDB" id="P15311"/>
<dbReference type="TreeFam" id="TF313935"/>
<dbReference type="PathwayCommons" id="P15311"/>
<dbReference type="Reactome" id="R-HSA-373752">
    <property type="pathway name" value="Netrin-1 signaling"/>
</dbReference>
<dbReference type="Reactome" id="R-HSA-437239">
    <property type="pathway name" value="Recycling pathway of L1"/>
</dbReference>
<dbReference type="Reactome" id="R-HSA-9662360">
    <property type="pathway name" value="Sensory processing of sound by inner hair cells of the cochlea"/>
</dbReference>
<dbReference type="Reactome" id="R-HSA-9662361">
    <property type="pathway name" value="Sensory processing of sound by outer hair cells of the cochlea"/>
</dbReference>
<dbReference type="SignaLink" id="P15311"/>
<dbReference type="SIGNOR" id="P15311"/>
<dbReference type="BioGRID-ORCS" id="7430">
    <property type="hits" value="22 hits in 1165 CRISPR screens"/>
</dbReference>
<dbReference type="CD-CODE" id="FB4E32DD">
    <property type="entry name" value="Presynaptic clusters and postsynaptic densities"/>
</dbReference>
<dbReference type="ChiTaRS" id="EZR">
    <property type="organism name" value="human"/>
</dbReference>
<dbReference type="EvolutionaryTrace" id="P15311"/>
<dbReference type="GeneWiki" id="Ezrin"/>
<dbReference type="GenomeRNAi" id="7430"/>
<dbReference type="Pharos" id="P15311">
    <property type="development level" value="Tbio"/>
</dbReference>
<dbReference type="PRO" id="PR:P15311"/>
<dbReference type="Proteomes" id="UP000005640">
    <property type="component" value="Chromosome 6"/>
</dbReference>
<dbReference type="RNAct" id="P15311">
    <property type="molecule type" value="protein"/>
</dbReference>
<dbReference type="Bgee" id="ENSG00000092820">
    <property type="expression patterns" value="Expressed in ventricular zone and 209 other cell types or tissues"/>
</dbReference>
<dbReference type="ExpressionAtlas" id="P15311">
    <property type="expression patterns" value="baseline and differential"/>
</dbReference>
<dbReference type="GO" id="GO:0015629">
    <property type="term" value="C:actin cytoskeleton"/>
    <property type="evidence" value="ECO:0000314"/>
    <property type="project" value="UniProtKB"/>
</dbReference>
<dbReference type="GO" id="GO:0005884">
    <property type="term" value="C:actin filament"/>
    <property type="evidence" value="ECO:0000314"/>
    <property type="project" value="HGNC-UCL"/>
</dbReference>
<dbReference type="GO" id="GO:0005912">
    <property type="term" value="C:adherens junction"/>
    <property type="evidence" value="ECO:0000318"/>
    <property type="project" value="GO_Central"/>
</dbReference>
<dbReference type="GO" id="GO:0045177">
    <property type="term" value="C:apical part of cell"/>
    <property type="evidence" value="ECO:0000314"/>
    <property type="project" value="BHF-UCL"/>
</dbReference>
<dbReference type="GO" id="GO:0016324">
    <property type="term" value="C:apical plasma membrane"/>
    <property type="evidence" value="ECO:0000314"/>
    <property type="project" value="UniProtKB"/>
</dbReference>
<dbReference type="GO" id="GO:0016323">
    <property type="term" value="C:basolateral plasma membrane"/>
    <property type="evidence" value="ECO:0000250"/>
    <property type="project" value="UniProtKB"/>
</dbReference>
<dbReference type="GO" id="GO:0005903">
    <property type="term" value="C:brush border"/>
    <property type="evidence" value="ECO:0000250"/>
    <property type="project" value="UniProtKB"/>
</dbReference>
<dbReference type="GO" id="GO:0071944">
    <property type="term" value="C:cell periphery"/>
    <property type="evidence" value="ECO:0000314"/>
    <property type="project" value="UniProtKB"/>
</dbReference>
<dbReference type="GO" id="GO:0042995">
    <property type="term" value="C:cell projection"/>
    <property type="evidence" value="ECO:0000314"/>
    <property type="project" value="UniProtKB"/>
</dbReference>
<dbReference type="GO" id="GO:0036064">
    <property type="term" value="C:ciliary basal body"/>
    <property type="evidence" value="ECO:0007669"/>
    <property type="project" value="Ensembl"/>
</dbReference>
<dbReference type="GO" id="GO:0030863">
    <property type="term" value="C:cortical cytoskeleton"/>
    <property type="evidence" value="ECO:0000304"/>
    <property type="project" value="HGNC-UCL"/>
</dbReference>
<dbReference type="GO" id="GO:0005737">
    <property type="term" value="C:cytoplasm"/>
    <property type="evidence" value="ECO:0000314"/>
    <property type="project" value="UniProtKB"/>
</dbReference>
<dbReference type="GO" id="GO:0005829">
    <property type="term" value="C:cytosol"/>
    <property type="evidence" value="ECO:0000314"/>
    <property type="project" value="UniProtKB"/>
</dbReference>
<dbReference type="GO" id="GO:0005768">
    <property type="term" value="C:endosome"/>
    <property type="evidence" value="ECO:0000314"/>
    <property type="project" value="UniProtKB"/>
</dbReference>
<dbReference type="GO" id="GO:0070062">
    <property type="term" value="C:extracellular exosome"/>
    <property type="evidence" value="ECO:0007005"/>
    <property type="project" value="UniProtKB"/>
</dbReference>
<dbReference type="GO" id="GO:0005615">
    <property type="term" value="C:extracellular space"/>
    <property type="evidence" value="ECO:0007005"/>
    <property type="project" value="UniProtKB"/>
</dbReference>
<dbReference type="GO" id="GO:0001650">
    <property type="term" value="C:fibrillar center"/>
    <property type="evidence" value="ECO:0000314"/>
    <property type="project" value="HPA"/>
</dbReference>
<dbReference type="GO" id="GO:0030175">
    <property type="term" value="C:filopodium"/>
    <property type="evidence" value="ECO:0000314"/>
    <property type="project" value="UniProtKB"/>
</dbReference>
<dbReference type="GO" id="GO:0005925">
    <property type="term" value="C:focal adhesion"/>
    <property type="evidence" value="ECO:0007005"/>
    <property type="project" value="UniProtKB"/>
</dbReference>
<dbReference type="GO" id="GO:0001772">
    <property type="term" value="C:immunological synapse"/>
    <property type="evidence" value="ECO:0000314"/>
    <property type="project" value="UniProtKB"/>
</dbReference>
<dbReference type="GO" id="GO:0016020">
    <property type="term" value="C:membrane"/>
    <property type="evidence" value="ECO:0007005"/>
    <property type="project" value="UniProtKB"/>
</dbReference>
<dbReference type="GO" id="GO:0005902">
    <property type="term" value="C:microvillus"/>
    <property type="evidence" value="ECO:0000314"/>
    <property type="project" value="BHF-UCL"/>
</dbReference>
<dbReference type="GO" id="GO:0031528">
    <property type="term" value="C:microvillus membrane"/>
    <property type="evidence" value="ECO:0007669"/>
    <property type="project" value="UniProtKB-SubCell"/>
</dbReference>
<dbReference type="GO" id="GO:0048471">
    <property type="term" value="C:perinuclear region of cytoplasm"/>
    <property type="evidence" value="ECO:0000314"/>
    <property type="project" value="UniProtKB"/>
</dbReference>
<dbReference type="GO" id="GO:0005886">
    <property type="term" value="C:plasma membrane"/>
    <property type="evidence" value="ECO:0000314"/>
    <property type="project" value="UniProtKB"/>
</dbReference>
<dbReference type="GO" id="GO:0044853">
    <property type="term" value="C:plasma membrane raft"/>
    <property type="evidence" value="ECO:0000314"/>
    <property type="project" value="UniProtKB"/>
</dbReference>
<dbReference type="GO" id="GO:0032991">
    <property type="term" value="C:protein-containing complex"/>
    <property type="evidence" value="ECO:0000314"/>
    <property type="project" value="UniProtKB"/>
</dbReference>
<dbReference type="GO" id="GO:0001726">
    <property type="term" value="C:ruffle"/>
    <property type="evidence" value="ECO:0000314"/>
    <property type="project" value="UniProtKB"/>
</dbReference>
<dbReference type="GO" id="GO:0032587">
    <property type="term" value="C:ruffle membrane"/>
    <property type="evidence" value="ECO:0007669"/>
    <property type="project" value="UniProtKB-SubCell"/>
</dbReference>
<dbReference type="GO" id="GO:0001931">
    <property type="term" value="C:uropod"/>
    <property type="evidence" value="ECO:0007669"/>
    <property type="project" value="Ensembl"/>
</dbReference>
<dbReference type="GO" id="GO:0031982">
    <property type="term" value="C:vesicle"/>
    <property type="evidence" value="ECO:0007005"/>
    <property type="project" value="UniProtKB"/>
</dbReference>
<dbReference type="GO" id="GO:0003779">
    <property type="term" value="F:actin binding"/>
    <property type="evidence" value="ECO:0000314"/>
    <property type="project" value="UniProtKB"/>
</dbReference>
<dbReference type="GO" id="GO:0051015">
    <property type="term" value="F:actin filament binding"/>
    <property type="evidence" value="ECO:0000314"/>
    <property type="project" value="UniProtKB"/>
</dbReference>
<dbReference type="GO" id="GO:0051117">
    <property type="term" value="F:ATPase binding"/>
    <property type="evidence" value="ECO:0000353"/>
    <property type="project" value="UniProtKB"/>
</dbReference>
<dbReference type="GO" id="GO:0045296">
    <property type="term" value="F:cadherin binding"/>
    <property type="evidence" value="ECO:0007005"/>
    <property type="project" value="BHF-UCL"/>
</dbReference>
<dbReference type="GO" id="GO:0050839">
    <property type="term" value="F:cell adhesion molecule binding"/>
    <property type="evidence" value="ECO:0000353"/>
    <property type="project" value="BHF-UCL"/>
</dbReference>
<dbReference type="GO" id="GO:0097718">
    <property type="term" value="F:disordered domain specific binding"/>
    <property type="evidence" value="ECO:0007669"/>
    <property type="project" value="Ensembl"/>
</dbReference>
<dbReference type="GO" id="GO:0042802">
    <property type="term" value="F:identical protein binding"/>
    <property type="evidence" value="ECO:0000353"/>
    <property type="project" value="IntAct"/>
</dbReference>
<dbReference type="GO" id="GO:0008017">
    <property type="term" value="F:microtubule binding"/>
    <property type="evidence" value="ECO:0000315"/>
    <property type="project" value="UniProtKB"/>
</dbReference>
<dbReference type="GO" id="GO:0019904">
    <property type="term" value="F:protein domain specific binding"/>
    <property type="evidence" value="ECO:0000353"/>
    <property type="project" value="UniProtKB"/>
</dbReference>
<dbReference type="GO" id="GO:0051018">
    <property type="term" value="F:protein kinase A binding"/>
    <property type="evidence" value="ECO:0000353"/>
    <property type="project" value="UniProtKB"/>
</dbReference>
<dbReference type="GO" id="GO:0034236">
    <property type="term" value="F:protein kinase A catalytic subunit binding"/>
    <property type="evidence" value="ECO:0000353"/>
    <property type="project" value="UniProtKB"/>
</dbReference>
<dbReference type="GO" id="GO:0034237">
    <property type="term" value="F:protein kinase A regulatory subunit binding"/>
    <property type="evidence" value="ECO:0000353"/>
    <property type="project" value="UniProtKB"/>
</dbReference>
<dbReference type="GO" id="GO:0003723">
    <property type="term" value="F:RNA binding"/>
    <property type="evidence" value="ECO:0007005"/>
    <property type="project" value="UniProtKB"/>
</dbReference>
<dbReference type="GO" id="GO:0044548">
    <property type="term" value="F:S100 protein binding"/>
    <property type="evidence" value="ECO:0000353"/>
    <property type="project" value="UniProtKB"/>
</dbReference>
<dbReference type="GO" id="GO:0030036">
    <property type="term" value="P:actin cytoskeleton organization"/>
    <property type="evidence" value="ECO:0000315"/>
    <property type="project" value="UniProtKB"/>
</dbReference>
<dbReference type="GO" id="GO:0051017">
    <property type="term" value="P:actin filament bundle assembly"/>
    <property type="evidence" value="ECO:0000314"/>
    <property type="project" value="UniProtKB"/>
</dbReference>
<dbReference type="GO" id="GO:0030953">
    <property type="term" value="P:astral microtubule organization"/>
    <property type="evidence" value="ECO:0000315"/>
    <property type="project" value="UniProtKB"/>
</dbReference>
<dbReference type="GO" id="GO:0071320">
    <property type="term" value="P:cellular response to cAMP"/>
    <property type="evidence" value="ECO:0000315"/>
    <property type="project" value="UniProtKB"/>
</dbReference>
<dbReference type="GO" id="GO:0043622">
    <property type="term" value="P:cortical microtubule organization"/>
    <property type="evidence" value="ECO:0000315"/>
    <property type="project" value="UniProtKB"/>
</dbReference>
<dbReference type="GO" id="GO:0051660">
    <property type="term" value="P:establishment of centrosome localization"/>
    <property type="evidence" value="ECO:0000315"/>
    <property type="project" value="UniProtKB"/>
</dbReference>
<dbReference type="GO" id="GO:0061028">
    <property type="term" value="P:establishment of endothelial barrier"/>
    <property type="evidence" value="ECO:0000316"/>
    <property type="project" value="UniProtKB"/>
</dbReference>
<dbReference type="GO" id="GO:0035088">
    <property type="term" value="P:establishment or maintenance of apical/basal cell polarity"/>
    <property type="evidence" value="ECO:0007669"/>
    <property type="project" value="Ensembl"/>
</dbReference>
<dbReference type="GO" id="GO:0046847">
    <property type="term" value="P:filopodium assembly"/>
    <property type="evidence" value="ECO:0000315"/>
    <property type="project" value="UniProtKB"/>
</dbReference>
<dbReference type="GO" id="GO:0001951">
    <property type="term" value="P:intestinal D-glucose absorption"/>
    <property type="evidence" value="ECO:0007669"/>
    <property type="project" value="Ensembl"/>
</dbReference>
<dbReference type="GO" id="GO:0007159">
    <property type="term" value="P:leukocyte cell-cell adhesion"/>
    <property type="evidence" value="ECO:0000270"/>
    <property type="project" value="BHF-UCL"/>
</dbReference>
<dbReference type="GO" id="GO:0022614">
    <property type="term" value="P:membrane to membrane docking"/>
    <property type="evidence" value="ECO:0000270"/>
    <property type="project" value="BHF-UCL"/>
</dbReference>
<dbReference type="GO" id="GO:0030033">
    <property type="term" value="P:microvillus assembly"/>
    <property type="evidence" value="ECO:0000315"/>
    <property type="project" value="UniProtKB"/>
</dbReference>
<dbReference type="GO" id="GO:0070373">
    <property type="term" value="P:negative regulation of ERK1 and ERK2 cascade"/>
    <property type="evidence" value="ECO:0000315"/>
    <property type="project" value="UniProtKB"/>
</dbReference>
<dbReference type="GO" id="GO:0032703">
    <property type="term" value="P:negative regulation of interleukin-2 production"/>
    <property type="evidence" value="ECO:0000315"/>
    <property type="project" value="UniProtKB"/>
</dbReference>
<dbReference type="GO" id="GO:1903753">
    <property type="term" value="P:negative regulation of p38MAPK cascade"/>
    <property type="evidence" value="ECO:0000315"/>
    <property type="project" value="UniProtKB"/>
</dbReference>
<dbReference type="GO" id="GO:0050860">
    <property type="term" value="P:negative regulation of T cell receptor signaling pathway"/>
    <property type="evidence" value="ECO:0000315"/>
    <property type="project" value="UniProtKB"/>
</dbReference>
<dbReference type="GO" id="GO:0000122">
    <property type="term" value="P:negative regulation of transcription by RNA polymerase II"/>
    <property type="evidence" value="ECO:0000315"/>
    <property type="project" value="UniProtKB"/>
</dbReference>
<dbReference type="GO" id="GO:2000643">
    <property type="term" value="P:positive regulation of early endosome to late endosome transport"/>
    <property type="evidence" value="ECO:0000315"/>
    <property type="project" value="UniProtKB"/>
</dbReference>
<dbReference type="GO" id="GO:0010628">
    <property type="term" value="P:positive regulation of gene expression"/>
    <property type="evidence" value="ECO:0000316"/>
    <property type="project" value="UniProtKB"/>
</dbReference>
<dbReference type="GO" id="GO:0040018">
    <property type="term" value="P:positive regulation of multicellular organism growth"/>
    <property type="evidence" value="ECO:0007669"/>
    <property type="project" value="Ensembl"/>
</dbReference>
<dbReference type="GO" id="GO:0045732">
    <property type="term" value="P:positive regulation of protein catabolic process"/>
    <property type="evidence" value="ECO:0000316"/>
    <property type="project" value="UniProtKB"/>
</dbReference>
<dbReference type="GO" id="GO:1902966">
    <property type="term" value="P:positive regulation of protein localization to early endosome"/>
    <property type="evidence" value="ECO:0000316"/>
    <property type="project" value="UniProtKB"/>
</dbReference>
<dbReference type="GO" id="GO:1903078">
    <property type="term" value="P:positive regulation of protein localization to plasma membrane"/>
    <property type="evidence" value="ECO:0007669"/>
    <property type="project" value="Ensembl"/>
</dbReference>
<dbReference type="GO" id="GO:0098974">
    <property type="term" value="P:postsynaptic actin cytoskeleton organization"/>
    <property type="evidence" value="ECO:0007669"/>
    <property type="project" value="Ensembl"/>
</dbReference>
<dbReference type="GO" id="GO:0010737">
    <property type="term" value="P:protein kinase A signaling"/>
    <property type="evidence" value="ECO:0000315"/>
    <property type="project" value="UniProtKB"/>
</dbReference>
<dbReference type="GO" id="GO:0072697">
    <property type="term" value="P:protein localization to cell cortex"/>
    <property type="evidence" value="ECO:0000315"/>
    <property type="project" value="UniProtKB"/>
</dbReference>
<dbReference type="GO" id="GO:0072659">
    <property type="term" value="P:protein localization to plasma membrane"/>
    <property type="evidence" value="ECO:0000315"/>
    <property type="project" value="UniProtKB"/>
</dbReference>
<dbReference type="GO" id="GO:0031503">
    <property type="term" value="P:protein-containing complex localization"/>
    <property type="evidence" value="ECO:0000315"/>
    <property type="project" value="UniProtKB"/>
</dbReference>
<dbReference type="GO" id="GO:0031623">
    <property type="term" value="P:receptor internalization"/>
    <property type="evidence" value="ECO:0007669"/>
    <property type="project" value="Ensembl"/>
</dbReference>
<dbReference type="GO" id="GO:0008360">
    <property type="term" value="P:regulation of cell shape"/>
    <property type="evidence" value="ECO:0000315"/>
    <property type="project" value="UniProtKB"/>
</dbReference>
<dbReference type="GO" id="GO:0032532">
    <property type="term" value="P:regulation of microvillus length"/>
    <property type="evidence" value="ECO:0007669"/>
    <property type="project" value="Ensembl"/>
</dbReference>
<dbReference type="GO" id="GO:1902115">
    <property type="term" value="P:regulation of organelle assembly"/>
    <property type="evidence" value="ECO:0000315"/>
    <property type="project" value="UniProtKB"/>
</dbReference>
<dbReference type="GO" id="GO:0003376">
    <property type="term" value="P:sphingosine-1-phosphate receptor signaling pathway"/>
    <property type="evidence" value="ECO:0000315"/>
    <property type="project" value="UniProtKB"/>
</dbReference>
<dbReference type="GO" id="GO:1902896">
    <property type="term" value="P:terminal web assembly"/>
    <property type="evidence" value="ECO:0007669"/>
    <property type="project" value="Ensembl"/>
</dbReference>
<dbReference type="CDD" id="cd06503">
    <property type="entry name" value="ATP-synt_Fo_b"/>
    <property type="match status" value="1"/>
</dbReference>
<dbReference type="CDD" id="cd14473">
    <property type="entry name" value="FERM_B-lobe"/>
    <property type="match status" value="1"/>
</dbReference>
<dbReference type="CDD" id="cd13194">
    <property type="entry name" value="FERM_C_ERM"/>
    <property type="match status" value="1"/>
</dbReference>
<dbReference type="CDD" id="cd17239">
    <property type="entry name" value="FERM_F1_Ezrin"/>
    <property type="match status" value="1"/>
</dbReference>
<dbReference type="DisProt" id="DP00775"/>
<dbReference type="FunFam" id="2.30.29.30:FF:000003">
    <property type="entry name" value="Radixin isoform 1"/>
    <property type="match status" value="1"/>
</dbReference>
<dbReference type="FunFam" id="1.20.80.10:FF:000002">
    <property type="entry name" value="radixin isoform X1"/>
    <property type="match status" value="1"/>
</dbReference>
<dbReference type="FunFam" id="3.10.20.90:FF:000013">
    <property type="entry name" value="radixin isoform X1"/>
    <property type="match status" value="1"/>
</dbReference>
<dbReference type="FunFam" id="1.20.5.450:FF:000001">
    <property type="entry name" value="radixin isoform X2"/>
    <property type="match status" value="1"/>
</dbReference>
<dbReference type="Gene3D" id="1.20.5.450">
    <property type="match status" value="1"/>
</dbReference>
<dbReference type="Gene3D" id="1.20.80.10">
    <property type="match status" value="1"/>
</dbReference>
<dbReference type="Gene3D" id="6.10.360.10">
    <property type="match status" value="1"/>
</dbReference>
<dbReference type="Gene3D" id="3.10.20.90">
    <property type="entry name" value="Phosphatidylinositol 3-kinase Catalytic Subunit, Chain A, domain 1"/>
    <property type="match status" value="1"/>
</dbReference>
<dbReference type="Gene3D" id="2.30.29.30">
    <property type="entry name" value="Pleckstrin-homology domain (PH domain)/Phosphotyrosine-binding domain (PTB)"/>
    <property type="match status" value="1"/>
</dbReference>
<dbReference type="InterPro" id="IPR019749">
    <property type="entry name" value="Band_41_domain"/>
</dbReference>
<dbReference type="InterPro" id="IPR011174">
    <property type="entry name" value="ERM"/>
</dbReference>
<dbReference type="InterPro" id="IPR011259">
    <property type="entry name" value="ERM_C_dom"/>
</dbReference>
<dbReference type="InterPro" id="IPR041789">
    <property type="entry name" value="ERM_FERM_C"/>
</dbReference>
<dbReference type="InterPro" id="IPR046810">
    <property type="entry name" value="ERM_helical"/>
</dbReference>
<dbReference type="InterPro" id="IPR000798">
    <property type="entry name" value="Ez/rad/moesin-like"/>
</dbReference>
<dbReference type="InterPro" id="IPR014352">
    <property type="entry name" value="FERM/acyl-CoA-bd_prot_sf"/>
</dbReference>
<dbReference type="InterPro" id="IPR035963">
    <property type="entry name" value="FERM_2"/>
</dbReference>
<dbReference type="InterPro" id="IPR019748">
    <property type="entry name" value="FERM_central"/>
</dbReference>
<dbReference type="InterPro" id="IPR019747">
    <property type="entry name" value="FERM_CS"/>
</dbReference>
<dbReference type="InterPro" id="IPR000299">
    <property type="entry name" value="FERM_domain"/>
</dbReference>
<dbReference type="InterPro" id="IPR018979">
    <property type="entry name" value="FERM_N"/>
</dbReference>
<dbReference type="InterPro" id="IPR018980">
    <property type="entry name" value="FERM_PH-like_C"/>
</dbReference>
<dbReference type="InterPro" id="IPR008954">
    <property type="entry name" value="Moesin_tail_sf"/>
</dbReference>
<dbReference type="InterPro" id="IPR011993">
    <property type="entry name" value="PH-like_dom_sf"/>
</dbReference>
<dbReference type="InterPro" id="IPR029071">
    <property type="entry name" value="Ubiquitin-like_domsf"/>
</dbReference>
<dbReference type="PANTHER" id="PTHR23281">
    <property type="entry name" value="MERLIN/MOESIN/EZRIN/RADIXIN"/>
    <property type="match status" value="1"/>
</dbReference>
<dbReference type="Pfam" id="PF00769">
    <property type="entry name" value="ERM_C"/>
    <property type="match status" value="1"/>
</dbReference>
<dbReference type="Pfam" id="PF20492">
    <property type="entry name" value="ERM_helical"/>
    <property type="match status" value="1"/>
</dbReference>
<dbReference type="Pfam" id="PF09380">
    <property type="entry name" value="FERM_C"/>
    <property type="match status" value="1"/>
</dbReference>
<dbReference type="Pfam" id="PF00373">
    <property type="entry name" value="FERM_M"/>
    <property type="match status" value="1"/>
</dbReference>
<dbReference type="Pfam" id="PF09379">
    <property type="entry name" value="FERM_N"/>
    <property type="match status" value="1"/>
</dbReference>
<dbReference type="PIRSF" id="PIRSF002305">
    <property type="entry name" value="ERM"/>
    <property type="match status" value="1"/>
</dbReference>
<dbReference type="PRINTS" id="PR00935">
    <property type="entry name" value="BAND41"/>
</dbReference>
<dbReference type="PRINTS" id="PR00661">
    <property type="entry name" value="ERMFAMILY"/>
</dbReference>
<dbReference type="SMART" id="SM00295">
    <property type="entry name" value="B41"/>
    <property type="match status" value="1"/>
</dbReference>
<dbReference type="SMART" id="SM01196">
    <property type="entry name" value="FERM_C"/>
    <property type="match status" value="1"/>
</dbReference>
<dbReference type="SUPFAM" id="SSF48678">
    <property type="entry name" value="Moesin tail domain"/>
    <property type="match status" value="1"/>
</dbReference>
<dbReference type="SUPFAM" id="SSF50729">
    <property type="entry name" value="PH domain-like"/>
    <property type="match status" value="1"/>
</dbReference>
<dbReference type="SUPFAM" id="SSF47031">
    <property type="entry name" value="Second domain of FERM"/>
    <property type="match status" value="1"/>
</dbReference>
<dbReference type="SUPFAM" id="SSF54236">
    <property type="entry name" value="Ubiquitin-like"/>
    <property type="match status" value="1"/>
</dbReference>
<dbReference type="PROSITE" id="PS00660">
    <property type="entry name" value="FERM_1"/>
    <property type="match status" value="1"/>
</dbReference>
<dbReference type="PROSITE" id="PS00661">
    <property type="entry name" value="FERM_2"/>
    <property type="match status" value="1"/>
</dbReference>
<dbReference type="PROSITE" id="PS50057">
    <property type="entry name" value="FERM_3"/>
    <property type="match status" value="1"/>
</dbReference>
<organism>
    <name type="scientific">Homo sapiens</name>
    <name type="common">Human</name>
    <dbReference type="NCBI Taxonomy" id="9606"/>
    <lineage>
        <taxon>Eukaryota</taxon>
        <taxon>Metazoa</taxon>
        <taxon>Chordata</taxon>
        <taxon>Craniata</taxon>
        <taxon>Vertebrata</taxon>
        <taxon>Euteleostomi</taxon>
        <taxon>Mammalia</taxon>
        <taxon>Eutheria</taxon>
        <taxon>Euarchontoglires</taxon>
        <taxon>Primates</taxon>
        <taxon>Haplorrhini</taxon>
        <taxon>Catarrhini</taxon>
        <taxon>Hominidae</taxon>
        <taxon>Homo</taxon>
    </lineage>
</organism>
<reference key="1">
    <citation type="journal article" date="1989" name="EMBO J.">
        <title>cDNA cloning and sequencing of the protein-tyrosine kinase substrate, ezrin, reveals homology to band 4.1.</title>
        <authorList>
            <person name="Gould K.L."/>
            <person name="Bretscher A."/>
            <person name="Esch F.S."/>
            <person name="Hunter T."/>
        </authorList>
    </citation>
    <scope>NUCLEOTIDE SEQUENCE [MRNA]</scope>
    <scope>PARTIAL PROTEIN SEQUENCE</scope>
    <scope>VARIANT VAL-532</scope>
</reference>
<reference key="2">
    <citation type="journal article" date="1989" name="J. Biol. Chem.">
        <title>Cytovillin, a microvillar Mr 75,000 protein. cDNA sequence, prokaryotic expression, and chromosomal localization.</title>
        <authorList>
            <person name="Turunen O."/>
            <person name="Winqvist R."/>
            <person name="Pakkanen R."/>
            <person name="Grzeschik K.-H."/>
            <person name="Wahlstroem T."/>
            <person name="Vaheri A."/>
        </authorList>
    </citation>
    <scope>NUCLEOTIDE SEQUENCE [MRNA]</scope>
    <scope>VARIANT VAL-532</scope>
    <source>
        <tissue>Placenta</tissue>
    </source>
</reference>
<reference key="3">
    <citation type="journal article" date="2007" name="BMC Genomics">
        <title>The full-ORF clone resource of the German cDNA consortium.</title>
        <authorList>
            <person name="Bechtel S."/>
            <person name="Rosenfelder H."/>
            <person name="Duda A."/>
            <person name="Schmidt C.P."/>
            <person name="Ernst U."/>
            <person name="Wellenreuther R."/>
            <person name="Mehrle A."/>
            <person name="Schuster C."/>
            <person name="Bahr A."/>
            <person name="Bloecker H."/>
            <person name="Heubner D."/>
            <person name="Hoerlein A."/>
            <person name="Michel G."/>
            <person name="Wedler H."/>
            <person name="Koehrer K."/>
            <person name="Ottenwaelder B."/>
            <person name="Poustka A."/>
            <person name="Wiemann S."/>
            <person name="Schupp I."/>
        </authorList>
    </citation>
    <scope>NUCLEOTIDE SEQUENCE [LARGE SCALE MRNA]</scope>
    <source>
        <tissue>Melanoma</tissue>
    </source>
</reference>
<reference key="4">
    <citation type="journal article" date="2003" name="Nature">
        <title>The DNA sequence and analysis of human chromosome 6.</title>
        <authorList>
            <person name="Mungall A.J."/>
            <person name="Palmer S.A."/>
            <person name="Sims S.K."/>
            <person name="Edwards C.A."/>
            <person name="Ashurst J.L."/>
            <person name="Wilming L."/>
            <person name="Jones M.C."/>
            <person name="Horton R."/>
            <person name="Hunt S.E."/>
            <person name="Scott C.E."/>
            <person name="Gilbert J.G.R."/>
            <person name="Clamp M.E."/>
            <person name="Bethel G."/>
            <person name="Milne S."/>
            <person name="Ainscough R."/>
            <person name="Almeida J.P."/>
            <person name="Ambrose K.D."/>
            <person name="Andrews T.D."/>
            <person name="Ashwell R.I.S."/>
            <person name="Babbage A.K."/>
            <person name="Bagguley C.L."/>
            <person name="Bailey J."/>
            <person name="Banerjee R."/>
            <person name="Barker D.J."/>
            <person name="Barlow K.F."/>
            <person name="Bates K."/>
            <person name="Beare D.M."/>
            <person name="Beasley H."/>
            <person name="Beasley O."/>
            <person name="Bird C.P."/>
            <person name="Blakey S.E."/>
            <person name="Bray-Allen S."/>
            <person name="Brook J."/>
            <person name="Brown A.J."/>
            <person name="Brown J.Y."/>
            <person name="Burford D.C."/>
            <person name="Burrill W."/>
            <person name="Burton J."/>
            <person name="Carder C."/>
            <person name="Carter N.P."/>
            <person name="Chapman J.C."/>
            <person name="Clark S.Y."/>
            <person name="Clark G."/>
            <person name="Clee C.M."/>
            <person name="Clegg S."/>
            <person name="Cobley V."/>
            <person name="Collier R.E."/>
            <person name="Collins J.E."/>
            <person name="Colman L.K."/>
            <person name="Corby N.R."/>
            <person name="Coville G.J."/>
            <person name="Culley K.M."/>
            <person name="Dhami P."/>
            <person name="Davies J."/>
            <person name="Dunn M."/>
            <person name="Earthrowl M.E."/>
            <person name="Ellington A.E."/>
            <person name="Evans K.A."/>
            <person name="Faulkner L."/>
            <person name="Francis M.D."/>
            <person name="Frankish A."/>
            <person name="Frankland J."/>
            <person name="French L."/>
            <person name="Garner P."/>
            <person name="Garnett J."/>
            <person name="Ghori M.J."/>
            <person name="Gilby L.M."/>
            <person name="Gillson C.J."/>
            <person name="Glithero R.J."/>
            <person name="Grafham D.V."/>
            <person name="Grant M."/>
            <person name="Gribble S."/>
            <person name="Griffiths C."/>
            <person name="Griffiths M.N.D."/>
            <person name="Hall R."/>
            <person name="Halls K.S."/>
            <person name="Hammond S."/>
            <person name="Harley J.L."/>
            <person name="Hart E.A."/>
            <person name="Heath P.D."/>
            <person name="Heathcott R."/>
            <person name="Holmes S.J."/>
            <person name="Howden P.J."/>
            <person name="Howe K.L."/>
            <person name="Howell G.R."/>
            <person name="Huckle E."/>
            <person name="Humphray S.J."/>
            <person name="Humphries M.D."/>
            <person name="Hunt A.R."/>
            <person name="Johnson C.M."/>
            <person name="Joy A.A."/>
            <person name="Kay M."/>
            <person name="Keenan S.J."/>
            <person name="Kimberley A.M."/>
            <person name="King A."/>
            <person name="Laird G.K."/>
            <person name="Langford C."/>
            <person name="Lawlor S."/>
            <person name="Leongamornlert D.A."/>
            <person name="Leversha M."/>
            <person name="Lloyd C.R."/>
            <person name="Lloyd D.M."/>
            <person name="Loveland J.E."/>
            <person name="Lovell J."/>
            <person name="Martin S."/>
            <person name="Mashreghi-Mohammadi M."/>
            <person name="Maslen G.L."/>
            <person name="Matthews L."/>
            <person name="McCann O.T."/>
            <person name="McLaren S.J."/>
            <person name="McLay K."/>
            <person name="McMurray A."/>
            <person name="Moore M.J.F."/>
            <person name="Mullikin J.C."/>
            <person name="Niblett D."/>
            <person name="Nickerson T."/>
            <person name="Novik K.L."/>
            <person name="Oliver K."/>
            <person name="Overton-Larty E.K."/>
            <person name="Parker A."/>
            <person name="Patel R."/>
            <person name="Pearce A.V."/>
            <person name="Peck A.I."/>
            <person name="Phillimore B.J.C.T."/>
            <person name="Phillips S."/>
            <person name="Plumb R.W."/>
            <person name="Porter K.M."/>
            <person name="Ramsey Y."/>
            <person name="Ranby S.A."/>
            <person name="Rice C.M."/>
            <person name="Ross M.T."/>
            <person name="Searle S.M."/>
            <person name="Sehra H.K."/>
            <person name="Sheridan E."/>
            <person name="Skuce C.D."/>
            <person name="Smith S."/>
            <person name="Smith M."/>
            <person name="Spraggon L."/>
            <person name="Squares S.L."/>
            <person name="Steward C.A."/>
            <person name="Sycamore N."/>
            <person name="Tamlyn-Hall G."/>
            <person name="Tester J."/>
            <person name="Theaker A.J."/>
            <person name="Thomas D.W."/>
            <person name="Thorpe A."/>
            <person name="Tracey A."/>
            <person name="Tromans A."/>
            <person name="Tubby B."/>
            <person name="Wall M."/>
            <person name="Wallis J.M."/>
            <person name="West A.P."/>
            <person name="White S.S."/>
            <person name="Whitehead S.L."/>
            <person name="Whittaker H."/>
            <person name="Wild A."/>
            <person name="Willey D.J."/>
            <person name="Wilmer T.E."/>
            <person name="Wood J.M."/>
            <person name="Wray P.W."/>
            <person name="Wyatt J.C."/>
            <person name="Young L."/>
            <person name="Younger R.M."/>
            <person name="Bentley D.R."/>
            <person name="Coulson A."/>
            <person name="Durbin R.M."/>
            <person name="Hubbard T."/>
            <person name="Sulston J.E."/>
            <person name="Dunham I."/>
            <person name="Rogers J."/>
            <person name="Beck S."/>
        </authorList>
    </citation>
    <scope>NUCLEOTIDE SEQUENCE [LARGE SCALE GENOMIC DNA]</scope>
</reference>
<reference key="5">
    <citation type="submission" date="2005-09" db="EMBL/GenBank/DDBJ databases">
        <authorList>
            <person name="Mural R.J."/>
            <person name="Istrail S."/>
            <person name="Sutton G.G."/>
            <person name="Florea L."/>
            <person name="Halpern A.L."/>
            <person name="Mobarry C.M."/>
            <person name="Lippert R."/>
            <person name="Walenz B."/>
            <person name="Shatkay H."/>
            <person name="Dew I."/>
            <person name="Miller J.R."/>
            <person name="Flanigan M.J."/>
            <person name="Edwards N.J."/>
            <person name="Bolanos R."/>
            <person name="Fasulo D."/>
            <person name="Halldorsson B.V."/>
            <person name="Hannenhalli S."/>
            <person name="Turner R."/>
            <person name="Yooseph S."/>
            <person name="Lu F."/>
            <person name="Nusskern D.R."/>
            <person name="Shue B.C."/>
            <person name="Zheng X.H."/>
            <person name="Zhong F."/>
            <person name="Delcher A.L."/>
            <person name="Huson D.H."/>
            <person name="Kravitz S.A."/>
            <person name="Mouchard L."/>
            <person name="Reinert K."/>
            <person name="Remington K.A."/>
            <person name="Clark A.G."/>
            <person name="Waterman M.S."/>
            <person name="Eichler E.E."/>
            <person name="Adams M.D."/>
            <person name="Hunkapiller M.W."/>
            <person name="Myers E.W."/>
            <person name="Venter J.C."/>
        </authorList>
    </citation>
    <scope>NUCLEOTIDE SEQUENCE [LARGE SCALE GENOMIC DNA]</scope>
</reference>
<reference key="6">
    <citation type="journal article" date="2004" name="Genome Res.">
        <title>The status, quality, and expansion of the NIH full-length cDNA project: the Mammalian Gene Collection (MGC).</title>
        <authorList>
            <consortium name="The MGC Project Team"/>
        </authorList>
    </citation>
    <scope>NUCLEOTIDE SEQUENCE [LARGE SCALE MRNA]</scope>
    <source>
        <tissue>Colon</tissue>
    </source>
</reference>
<reference key="7">
    <citation type="journal article" date="1996" name="Biochem. Biophys. Res. Commun.">
        <title>Identification of the 70kD heat shock cognate protein (Hsc70) and alpha-actinin-1 as novel phosphotyrosine-containing proteins in T lymphocytes.</title>
        <authorList>
            <person name="Egerton M."/>
            <person name="Moritz R.L."/>
            <person name="Druker B."/>
            <person name="Kelso A."/>
            <person name="Simpson R.J."/>
        </authorList>
    </citation>
    <scope>PROTEIN SEQUENCE OF 172-180 AND 343-350</scope>
</reference>
<reference key="8">
    <citation type="submission" date="2008-12" db="UniProtKB">
        <authorList>
            <person name="Lubec G."/>
            <person name="Chen W.-Q."/>
            <person name="Sun Y."/>
        </authorList>
    </citation>
    <scope>PROTEIN SEQUENCE OF 264-273; 428-435 AND 530-542</scope>
    <scope>IDENTIFICATION BY MASS SPECTROMETRY</scope>
    <source>
        <tissue>Fetal brain cortex</tissue>
    </source>
</reference>
<reference key="9">
    <citation type="journal article" date="1992" name="J. Biol. Chem.">
        <title>Identification of the two major epidermal growth factor-induced tyrosine phosphorylation sites in the microvillar core protein ezrin.</title>
        <authorList>
            <person name="Krieg J."/>
            <person name="Hunter T."/>
        </authorList>
    </citation>
    <scope>PHOSPHORYLATION AT TYR-146 AND TYR-354 BY PDGFR</scope>
</reference>
<reference key="10">
    <citation type="journal article" date="1992" name="J. Immunol.">
        <title>Identification of ezrin as an 81-kDa tyrosine-phosphorylated protein in T cells.</title>
        <authorList>
            <person name="Egerton M."/>
            <person name="Burgess W.H."/>
            <person name="Chen D."/>
            <person name="Druker B.J."/>
            <person name="Bretscher A."/>
            <person name="Samelson L.E."/>
        </authorList>
    </citation>
    <scope>PHOSPHORYLATION</scope>
</reference>
<reference key="11">
    <citation type="journal article" date="1997" name="J. Cell Biol.">
        <title>Identification of EBP50: a PDZ-containing phosphoprotein that associates with members of the ezrin-radixin-moesin family.</title>
        <authorList>
            <person name="Reczek D."/>
            <person name="Berryman M."/>
            <person name="Bretscher A."/>
        </authorList>
    </citation>
    <scope>INTERACTION WITH NHERF1</scope>
</reference>
<reference key="12">
    <citation type="journal article" date="2003" name="Exp. Cell Res.">
        <title>PACE-1, a novel protein that interacts with the C-terminal domain of ezrin.</title>
        <authorList>
            <person name="Sullivan A."/>
            <person name="Uff C.R."/>
            <person name="Isacke C.M."/>
            <person name="Thorne R.F."/>
        </authorList>
    </citation>
    <scope>INTERACTION WITH SCYL3</scope>
    <source>
        <tissue>Kidney</tissue>
    </source>
</reference>
<reference key="13">
    <citation type="journal article" date="2003" name="Mol. Biol. Cell">
        <title>Ca2+-dependent binding and activation of dormant ezrin by dimeric S100P.</title>
        <authorList>
            <person name="Koltzscher M."/>
            <person name="Neumann C."/>
            <person name="Konig S."/>
            <person name="Gerke V."/>
        </authorList>
    </citation>
    <scope>INTERACTION WITH S100P</scope>
</reference>
<reference key="14">
    <citation type="journal article" date="2005" name="Carcinogenesis">
        <title>Role of a novel EGF-like domain-containing gene NGX6 in cell adhesion modulation in nasopharyngeal carcinoma cells.</title>
        <authorList>
            <person name="Ma J."/>
            <person name="Zhou J."/>
            <person name="Fan S."/>
            <person name="Wang L.-L."/>
            <person name="Li X.-L."/>
            <person name="Yan Q."/>
            <person name="Zhou M."/>
            <person name="Liu H.-Y."/>
            <person name="Zhang Q."/>
            <person name="Zhou H."/>
            <person name="Gan K."/>
            <person name="Li Z."/>
            <person name="Peng C."/>
            <person name="Xiong W."/>
            <person name="Tan C."/>
            <person name="Shen S.-R."/>
            <person name="Yang J."/>
            <person name="Li J."/>
            <person name="Li G.-Y."/>
        </authorList>
    </citation>
    <scope>INTERACTION WITH TMEM8B</scope>
</reference>
<reference key="15">
    <citation type="journal article" date="2005" name="Mol. Cell. Neurosci.">
        <title>Characterization of the NF2 protein merlin and the ERM protein ezrin in human, rat, and mouse central nervous system.</title>
        <authorList>
            <person name="Groenholm M."/>
            <person name="Teesalu T."/>
            <person name="Tyynelaa J."/>
            <person name="Piltti K."/>
            <person name="Boehling T."/>
            <person name="Wartiovaara K."/>
            <person name="Vaheri A."/>
            <person name="Carpen O."/>
        </authorList>
    </citation>
    <scope>TISSUE SPECIFICITY</scope>
    <scope>DEVELOPMENTAL STAGE</scope>
</reference>
<reference key="16">
    <citation type="journal article" date="2006" name="J. Cell Sci.">
        <title>Podoplanin binds ERM proteins to activate RhoA and promote epithelial-mesenchymal transition.</title>
        <authorList>
            <person name="Martin-Villar E."/>
            <person name="Megias D."/>
            <person name="Castel S."/>
            <person name="Yurrita M.M."/>
            <person name="Vilaro S."/>
            <person name="Quintanilla M."/>
        </authorList>
    </citation>
    <scope>INTERACTION WITH PDPN</scope>
</reference>
<reference key="17">
    <citation type="journal article" date="2007" name="Cancer Res.">
        <title>Podocalyxin increases the aggressive phenotype of breast and prostate cancer cells in vitro through its interaction with ezrin.</title>
        <authorList>
            <person name="Sizemore S."/>
            <person name="Cicek M."/>
            <person name="Sizemore N."/>
            <person name="Ng K.P."/>
            <person name="Casey G."/>
        </authorList>
    </citation>
    <scope>INTERACTION WITH PODXL</scope>
</reference>
<reference key="18">
    <citation type="journal article" date="2007" name="Mol. Biol. Cell">
        <title>Interaction of ezrin with the novel guanine nucleotide exchange factor PLEKHG6 promotes RhoG-dependent apical cytoskeleton rearrangements in epithelial cells.</title>
        <authorList>
            <person name="D'Angelo R."/>
            <person name="Aresta S."/>
            <person name="Blangy A."/>
            <person name="Del Maestro L."/>
            <person name="Louvard D."/>
            <person name="Arpin M."/>
        </authorList>
    </citation>
    <scope>FUNCTION</scope>
    <scope>INTERACTION WITH PLEKHG6</scope>
</reference>
<reference key="19">
    <citation type="journal article" date="2008" name="EMBO J.">
        <title>Spatial recruitment and activation of the Fes kinase by ezrin promotes HGF-induced cell scattering.</title>
        <authorList>
            <person name="Naba A."/>
            <person name="Reverdy C."/>
            <person name="Louvard D."/>
            <person name="Arpin M."/>
        </authorList>
    </citation>
    <scope>INTERACTION WITH FES/FPS</scope>
    <scope>PHOSPHORYLATION AT TYR-146 AND TYR-478</scope>
    <scope>SUBCELLULAR LOCATION</scope>
</reference>
<reference key="20">
    <citation type="journal article" date="2008" name="J. Cell Sci.">
        <title>Atypical protein kinase C (iota) activates ezrin in the apical domain of intestinal epithelial cells.</title>
        <authorList>
            <person name="Wald F.A."/>
            <person name="Oriolo A.S."/>
            <person name="Mashukova A."/>
            <person name="Fregien N.L."/>
            <person name="Langshaw A.H."/>
            <person name="Salas P.J."/>
        </authorList>
    </citation>
    <scope>FUNCTION</scope>
    <scope>PHOSPHORYLATION AT THR-567</scope>
</reference>
<reference key="21">
    <citation type="journal article" date="2009" name="Biochim. Biophys. Acta">
        <title>Generation and characterization of a novel, permanently active S100P mutant.</title>
        <authorList>
            <person name="Austermann J."/>
            <person name="Nazmi A.R."/>
            <person name="Heil A."/>
            <person name="Fritz G."/>
            <person name="Kolinski M."/>
            <person name="Filipek S."/>
            <person name="Gerke V."/>
        </authorList>
    </citation>
    <scope>FUNCTION</scope>
    <scope>INTERACTION WITH S100P</scope>
</reference>
<reference key="22">
    <citation type="journal article" date="2009" name="FEBS Lett.">
        <title>MCC, a new interacting protein for Scrib, is required for cell migration in epithelial cells.</title>
        <authorList>
            <person name="Arnaud C."/>
            <person name="Sebbagh M."/>
            <person name="Nola S."/>
            <person name="Audebert S."/>
            <person name="Bidaut G."/>
            <person name="Hermant A."/>
            <person name="Gayet O."/>
            <person name="Dusetti N.J."/>
            <person name="Ollendorff V."/>
            <person name="Santoni M.J."/>
            <person name="Borg J.P."/>
            <person name="Lecine P."/>
        </authorList>
    </citation>
    <scope>INTERACTION WITH MCC</scope>
</reference>
<reference key="23">
    <citation type="journal article" date="2009" name="Science">
        <title>Lysine acetylation targets protein complexes and co-regulates major cellular functions.</title>
        <authorList>
            <person name="Choudhary C."/>
            <person name="Kumar C."/>
            <person name="Gnad F."/>
            <person name="Nielsen M.L."/>
            <person name="Rehman M."/>
            <person name="Walther T.C."/>
            <person name="Olsen J.V."/>
            <person name="Mann M."/>
        </authorList>
    </citation>
    <scope>ACETYLATION [LARGE SCALE ANALYSIS] AT LYS-60</scope>
    <scope>IDENTIFICATION BY MASS SPECTROMETRY [LARGE SCALE ANALYSIS]</scope>
</reference>
<reference key="24">
    <citation type="journal article" date="2011" name="BMC Syst. Biol.">
        <title>Initial characterization of the human central proteome.</title>
        <authorList>
            <person name="Burkard T.R."/>
            <person name="Planyavsky M."/>
            <person name="Kaupe I."/>
            <person name="Breitwieser F.P."/>
            <person name="Buerckstuemmer T."/>
            <person name="Bennett K.L."/>
            <person name="Superti-Furga G."/>
            <person name="Colinge J."/>
        </authorList>
    </citation>
    <scope>IDENTIFICATION BY MASS SPECTROMETRY [LARGE SCALE ANALYSIS]</scope>
</reference>
<reference key="25">
    <citation type="journal article" date="2013" name="J. Proteome Res.">
        <title>Toward a comprehensive characterization of a human cancer cell phosphoproteome.</title>
        <authorList>
            <person name="Zhou H."/>
            <person name="Di Palma S."/>
            <person name="Preisinger C."/>
            <person name="Peng M."/>
            <person name="Polat A.N."/>
            <person name="Heck A.J."/>
            <person name="Mohammed S."/>
        </authorList>
    </citation>
    <scope>PHOSPHORYLATION [LARGE SCALE ANALYSIS] AT SER-366</scope>
    <scope>IDENTIFICATION BY MASS SPECTROMETRY [LARGE SCALE ANALYSIS]</scope>
    <source>
        <tissue>Cervix carcinoma</tissue>
    </source>
</reference>
<reference key="26">
    <citation type="journal article" date="2014" name="Cell">
        <title>Target-selective protein S-nitrosylation by sequence motif recognition.</title>
        <authorList>
            <person name="Jia J."/>
            <person name="Arif A."/>
            <person name="Terenzi F."/>
            <person name="Willard B."/>
            <person name="Plow E.F."/>
            <person name="Hazen S.L."/>
            <person name="Fox P.L."/>
        </authorList>
    </citation>
    <scope>S-NITROSYLATION</scope>
    <scope>DOMAIN</scope>
</reference>
<reference key="27">
    <citation type="journal article" date="2015" name="Proteomics">
        <title>N-terminome analysis of the human mitochondrial proteome.</title>
        <authorList>
            <person name="Vaca Jacome A.S."/>
            <person name="Rabilloud T."/>
            <person name="Schaeffer-Reiss C."/>
            <person name="Rompais M."/>
            <person name="Ayoub D."/>
            <person name="Lane L."/>
            <person name="Bairoch A."/>
            <person name="Van Dorsselaer A."/>
            <person name="Carapito C."/>
        </authorList>
    </citation>
    <scope>IDENTIFICATION BY MASS SPECTROMETRY [LARGE SCALE ANALYSIS]</scope>
</reference>
<reference key="28">
    <citation type="journal article" date="2003" name="J. Biol. Chem.">
        <title>Structure of the active N-terminal domain of Ezrin. Conformational and mobility changes identify keystone interactions.</title>
        <authorList>
            <person name="Smith W.J."/>
            <person name="Nassar N."/>
            <person name="Bretscher A."/>
            <person name="Cerione R.A."/>
            <person name="Karplus P.A."/>
        </authorList>
    </citation>
    <scope>X-RAY CRYSTALLOGRAPHY (2.3 ANGSTROMS) OF 1-297</scope>
</reference>
<reference key="29">
    <citation type="journal article" date="2016" name="Biochem. J.">
        <title>Structural characterization suggests models for monomeric and dimeric forms of full-length ezrin.</title>
        <authorList>
            <person name="Phang J.M."/>
            <person name="Harrop S.J."/>
            <person name="Duff A.P."/>
            <person name="Sokolova A.V."/>
            <person name="Crossett B."/>
            <person name="Walsh J.C."/>
            <person name="Beckham S.A."/>
            <person name="Nguyen C.D."/>
            <person name="Davies R.B."/>
            <person name="Glockner C."/>
            <person name="Bromley E.H."/>
            <person name="Wilk K.E."/>
            <person name="Curmi P.M."/>
        </authorList>
    </citation>
    <scope>X-RAY CRYSTALLOGRAPHY (1.75 ANGSTROMS) OF 1-296</scope>
    <scope>DOMAIN</scope>
    <scope>SUBUNIT</scope>
</reference>
<gene>
    <name type="primary">EZR</name>
    <name type="synonym">VIL2</name>
</gene>
<proteinExistence type="evidence at protein level"/>
<sequence>MPKPINVRVTTMDAELEFAIQPNTTGKQLFDQVVKTIGLREVWYFGLHYVDNKGFPTWLKLDKKVSAQEVRKENPLQFKFRAKFYPEDVAEELIQDITQKLFFLQVKEGILSDEIYCPPETAVLLGSYAVQAKFGDYNKEVHKSGYLSSERLIPQRVMDQHKLTRDQWEDRIQVWHAEHRGMLKDNAMLEYLKIAQDLEMYGINYFEIKNKKGTDLWLGVDALGLNIYEKDDKLTPKIGFPWSEIRNISFNDKKFVIKPIDKKAPDFVFYAPRLRINKRILQLCMGNHELYMRRRKPDTIEVQQMKAQAREEKHQKQLERQQLETEKKRRETVEREKEQMMREKEELMLRLQDYEEKTKKAERELSEQIQRALQLEEERKRAQEEAERLEADRMAALRAKEELERQAVDQIKSQEQLAAELAEYTAKIALLEEARRRKEDEVEEWQHRAKEAQDDLVKTKEELHLVMTAPPPPPPPVYEPVSYHVQESLQDEGAEPTGYSAELSSEGIRDDRNEEKRITEAEKNERVQRQLLTLSSELSQARDENKRTHNDIIHNENMRQGRDKYKTLRQIRQGNTKQRIDEFEAL</sequence>
<comment type="function">
    <text evidence="16 18 19">Probably involved in connections of major cytoskeletal structures to the plasma membrane. In epithelial cells, required for the formation of microvilli and membrane ruffles on the apical pole. Along with PLEKHG6, required for normal macropinocytosis.</text>
</comment>
<comment type="activity regulation">
    <text evidence="1">A head-to-tail association, of the N-terminal and C-terminal halves results in a closed conformation (inactive form) which is incapable of actin or membrane-binding.</text>
</comment>
<comment type="subunit">
    <text evidence="2 3 4 5 9 10 12 14 15 16 17 19 20 23 24">Monomer. Homodimer (PubMed:27364155). Interacts with PALS1 and NHERF2. Found in a complex with EZR, PODXL and NHERF2 (By similarity). Interacts with MCC, PLEKHG6, PODXL, SCYL3/PACE1, NHERF1 and TMEM8B (PubMed:12651155, PubMed:15498789, PubMed:17616675, PubMed:17881735, PubMed:19555689, PubMed:9314537). Interacts (when phosphorylated) with FES/FPS (PubMed:18046454). Interacts with dimeric S100P, the interaction may be activating through unmasking of F-actin binding sites (PubMed:12808036, PubMed:19111582). Identified in complexes that contain VIM, EZR, AHNAK, BFSP1, BFSP2, ANK2, PLEC, PRX and spectrin (By similarity). Detected in a complex composed of at least EZR, AHNAK, PPL and PRX (By similarity). Interacts with PDPN (via cytoplasmic domain); activates RHOA and promotes epithelial-mesenchymal transition (PubMed:17046996). Interacts with SPN/CD43 cytoplasmic tail, CD44 and ICAM2 (By similarity). Interacts with SLC9A3; interaction targets SLC9A3 to the apical membrane (By similarity). Interacts with SLC9A1; regulates interactions of SLC9A1 with cytoskeletal and promotes stress fiber formation (By similarity). Interacts with CLIC5; may work together in a complex which also includes RDX and MYO6 to stabilize linkages between the plasma membrane and subjacent actin cytoskeleton at the base of stereocilia (By similarity).</text>
</comment>
<comment type="interaction">
    <interactant intactId="EBI-1056902">
        <id>P15311</id>
    </interactant>
    <interactant intactId="EBI-949378">
        <id>Q14457</id>
        <label>BECN1</label>
    </interactant>
    <organismsDiffer>false</organismsDiffer>
    <experiments>3</experiments>
</comment>
<comment type="interaction">
    <interactant intactId="EBI-1056902">
        <id>P15311</id>
    </interactant>
    <interactant intactId="EBI-12904676">
        <id>Q8WU43</id>
        <label>C2orf15</label>
    </interactant>
    <organismsDiffer>false</organismsDiffer>
    <experiments>3</experiments>
</comment>
<comment type="interaction">
    <interactant intactId="EBI-1056902">
        <id>P15311</id>
    </interactant>
    <interactant intactId="EBI-1542113">
        <id>P07384</id>
        <label>CAPN1</label>
    </interactant>
    <organismsDiffer>false</organismsDiffer>
    <experiments>2</experiments>
</comment>
<comment type="interaction">
    <interactant intactId="EBI-1056902">
        <id>P15311</id>
    </interactant>
    <interactant intactId="EBI-297353">
        <id>P00533</id>
        <label>EGFR</label>
    </interactant>
    <organismsDiffer>false</organismsDiffer>
    <experiments>3</experiments>
</comment>
<comment type="interaction">
    <interactant intactId="EBI-1056902">
        <id>P15311</id>
    </interactant>
    <interactant intactId="EBI-1056902">
        <id>P15311</id>
        <label>EZR</label>
    </interactant>
    <organismsDiffer>false</organismsDiffer>
    <experiments>7</experiments>
</comment>
<comment type="interaction">
    <interactant intactId="EBI-1056902">
        <id>P15311</id>
    </interactant>
    <interactant intactId="EBI-1055635">
        <id>P07332</id>
        <label>FES</label>
    </interactant>
    <organismsDiffer>false</organismsDiffer>
    <experiments>8</experiments>
</comment>
<comment type="interaction">
    <interactant intactId="EBI-1056902">
        <id>P15311</id>
    </interactant>
    <interactant intactId="EBI-466029">
        <id>P42858</id>
        <label>HTT</label>
    </interactant>
    <organismsDiffer>false</organismsDiffer>
    <experiments>4</experiments>
</comment>
<comment type="interaction">
    <interactant intactId="EBI-1056902">
        <id>P15311</id>
    </interactant>
    <interactant intactId="EBI-16427312">
        <id>Q8IZU9</id>
        <label>KIRREL3</label>
    </interactant>
    <organismsDiffer>false</organismsDiffer>
    <experiments>5</experiments>
</comment>
<comment type="interaction">
    <interactant intactId="EBI-1056902">
        <id>P15311</id>
    </interactant>
    <interactant intactId="EBI-389668">
        <id>Q00987</id>
        <label>MDM2</label>
    </interactant>
    <organismsDiffer>false</organismsDiffer>
    <experiments>3</experiments>
</comment>
<comment type="interaction">
    <interactant intactId="EBI-1056902">
        <id>P15311</id>
    </interactant>
    <interactant intactId="EBI-25830642">
        <id>Q8N108-16</id>
        <label>MIER1</label>
    </interactant>
    <organismsDiffer>false</organismsDiffer>
    <experiments>3</experiments>
</comment>
<comment type="interaction">
    <interactant intactId="EBI-1056902">
        <id>P15311</id>
    </interactant>
    <interactant intactId="EBI-2555085">
        <id>Q8IVT2</id>
        <label>MISP</label>
    </interactant>
    <organismsDiffer>false</organismsDiffer>
    <experiments>6</experiments>
</comment>
<comment type="interaction">
    <interactant intactId="EBI-1056902">
        <id>P15311</id>
    </interactant>
    <interactant intactId="EBI-349787">
        <id>O14745</id>
        <label>NHERF1</label>
    </interactant>
    <organismsDiffer>false</organismsDiffer>
    <experiments>6</experiments>
</comment>
<comment type="interaction">
    <interactant intactId="EBI-1056902">
        <id>P15311</id>
    </interactant>
    <interactant intactId="EBI-2514878">
        <id>P35241</id>
        <label>RDX</label>
    </interactant>
    <organismsDiffer>false</organismsDiffer>
    <experiments>10</experiments>
</comment>
<comment type="interaction">
    <interactant intactId="EBI-1056902">
        <id>P15311</id>
    </interactant>
    <interactant intactId="EBI-752230">
        <id>P29034</id>
        <label>S100A2</label>
    </interactant>
    <organismsDiffer>false</organismsDiffer>
    <experiments>2</experiments>
</comment>
<comment type="interaction">
    <interactant intactId="EBI-1056902">
        <id>P15311</id>
    </interactant>
    <interactant intactId="EBI-717058">
        <id>P26447</id>
        <label>S100A4</label>
    </interactant>
    <organismsDiffer>false</organismsDiffer>
    <experiments>3</experiments>
</comment>
<comment type="interaction">
    <interactant intactId="EBI-1056902">
        <id>P15311</id>
    </interactant>
    <interactant intactId="EBI-1380680">
        <id>Q8IZE3</id>
        <label>SCYL3</label>
    </interactant>
    <organismsDiffer>false</organismsDiffer>
    <experiments>5</experiments>
</comment>
<comment type="interaction">
    <interactant intactId="EBI-1056902">
        <id>P15311</id>
    </interactant>
    <interactant intactId="EBI-2801449">
        <id>P55011</id>
        <label>SLC12A2</label>
    </interactant>
    <organismsDiffer>false</organismsDiffer>
    <experiments>3</experiments>
</comment>
<comment type="interaction">
    <interactant intactId="EBI-1056902">
        <id>P15311</id>
    </interactant>
    <interactant intactId="EBI-17438286">
        <id>Q8WTV1</id>
        <label>THAP3</label>
    </interactant>
    <organismsDiffer>false</organismsDiffer>
    <experiments>3</experiments>
</comment>
<comment type="interaction">
    <interactant intactId="EBI-1056902">
        <id>P15311</id>
    </interactant>
    <interactant intactId="EBI-1798965">
        <id>Q63155</id>
        <label>Dcc</label>
    </interactant>
    <organismsDiffer>true</organismsDiffer>
    <experiments>3</experiments>
</comment>
<comment type="subcellular location">
    <subcellularLocation>
        <location evidence="17">Apical cell membrane</location>
        <topology evidence="17">Peripheral membrane protein</topology>
        <orientation evidence="17">Cytoplasmic side</orientation>
    </subcellularLocation>
    <subcellularLocation>
        <location evidence="17">Cell projection</location>
    </subcellularLocation>
    <subcellularLocation>
        <location evidence="17">Cell projection</location>
        <location evidence="17">Microvillus membrane</location>
        <topology evidence="17">Peripheral membrane protein</topology>
        <orientation evidence="17">Cytoplasmic side</orientation>
    </subcellularLocation>
    <subcellularLocation>
        <location evidence="17">Cell projection</location>
        <location evidence="17">Ruffle membrane</location>
        <topology evidence="17">Peripheral membrane protein</topology>
        <orientation evidence="17">Cytoplasmic side</orientation>
    </subcellularLocation>
    <subcellularLocation>
        <location evidence="17">Cytoplasm</location>
        <location evidence="17">Cell cortex</location>
    </subcellularLocation>
    <subcellularLocation>
        <location evidence="17">Cytoplasm</location>
        <location evidence="17">Cytoskeleton</location>
    </subcellularLocation>
    <subcellularLocation>
        <location evidence="2">Cell projection</location>
        <location evidence="2">Microvillus</location>
    </subcellularLocation>
    <text evidence="4">Localization to the apical membrane of parietal cells depends on the interaction with PALS1. Localizes to cell extensions and peripheral processes of astrocytes (By similarity). Microvillar peripheral membrane protein (cytoplasmic side).</text>
</comment>
<comment type="tissue specificity">
    <text evidence="13">Expressed in cerebral cortex, basal ganglia, hippocampus, hypophysis, and optic nerve. Weakly expressed in brain stem and diencephalon. Stronger expression was detected in gray matter of frontal lobe compared to white matter (at protein level). Component of the microvilli of intestinal epithelial cells. Preferentially expressed in astrocytes of hippocampus, frontal cortex, thalamus, parahippocampal cortex, amygdala, insula, and corpus callosum. Not detected in neurons in most tissues studied.</text>
</comment>
<comment type="developmental stage">
    <text evidence="13">Very strong staining is detected in the Purkinje cell layer and in part of the molecular layer of the infant brain compared to adult brain.</text>
</comment>
<comment type="domain">
    <text evidence="23">Has three main structural domains: an N-terminal FERM domain, a central alpha-helical domain and a C-terminal actin-binding domain.</text>
</comment>
<comment type="domain">
    <text evidence="23">The FERM domain is organized in a clover-shaped structure that comprises three subdomains identified as F1 (residues 2-82), F2 (residues 96-198), and F3 (residues 204-296). In the active form, the subdomain F3 adopts two mutually exclusive conformational isomers where a row of four phenylalanine side chains (Phe250, Phe255, Phe267 and Phe269) must point in the same direction. In the autoinhibited form, the F3 subdomain interacts with the C-terminal domain (residues 516-586) and stabilizes the structure, selecting only one possible arrangement of phenylalanine side chains. The FERM domain mediates binding to membrane lipids and signaling molecules.</text>
</comment>
<comment type="domain">
    <text evidence="28">The central alpha-helical domain is composed of two alpha helices (residues 326-406 and 417-466) connected by a linker. It protrudes from the FERM domain forming a coiled coil structure where the linker can have either a loop or a helix conformation. The monomer is predicted to form an intra-molecular helix-loop-helix coiled coil structure. Whereas the dimer adopts an elongated dumbbell-shaped configuration where continuous alpha helices from each protomer are organized in a antiparallel coiled coil structure that connect FERM:C-terminal domain swapped complex at each end. The dimer is predicted to link actin filaments parallel to the plasma membrane.</text>
</comment>
<comment type="domain">
    <text evidence="27">The [IL]-x-C-x-x-[DE] motif is a proposed target motif for cysteine S-nitrosylation mediated by the iNOS-S100A8/A9 transnitrosylase complex.</text>
</comment>
<comment type="PTM">
    <text evidence="1">Phosphorylated by tyrosine-protein kinases. Phosphorylation by ROCK2 suppresses the head-to-tail association of the N-terminal and C-terminal halves resulting in an opened conformation which is capable of actin and membrane-binding (By similarity).</text>
</comment>
<comment type="PTM">
    <text evidence="27">S-nitrosylation is induced by interferon-gamma and oxidatively-modified low-densitity lipoprotein (LDL(ox)) possibly implicating the iNOS-S100A8/9 transnitrosylase complex.</text>
</comment>
<comment type="sequence caution" evidence="25">
    <conflict type="erroneous initiation">
        <sequence resource="EMBL-CDS" id="AAA61278"/>
    </conflict>
    <text>Truncated N-terminus.</text>
</comment>
<comment type="sequence caution" evidence="25">
    <conflict type="erroneous initiation">
        <sequence resource="EMBL-CDS" id="CAB82418"/>
    </conflict>
    <text>Extended N-terminus.</text>
</comment>
<accession>P15311</accession>
<accession>E1P5A8</accession>
<accession>P23714</accession>
<accession>Q4VX75</accession>
<accession>Q96CU8</accession>
<accession>Q9NSJ4</accession>
<keyword id="KW-0002">3D-structure</keyword>
<keyword id="KW-0007">Acetylation</keyword>
<keyword id="KW-1003">Cell membrane</keyword>
<keyword id="KW-0966">Cell projection</keyword>
<keyword id="KW-0133">Cell shape</keyword>
<keyword id="KW-0175">Coiled coil</keyword>
<keyword id="KW-0963">Cytoplasm</keyword>
<keyword id="KW-0206">Cytoskeleton</keyword>
<keyword id="KW-0903">Direct protein sequencing</keyword>
<keyword id="KW-0472">Membrane</keyword>
<keyword id="KW-0597">Phosphoprotein</keyword>
<keyword id="KW-1267">Proteomics identification</keyword>
<keyword id="KW-1185">Reference proteome</keyword>
<keyword id="KW-0702">S-nitrosylation</keyword>
<feature type="chain" id="PRO_0000219408" description="Ezrin">
    <location>
        <begin position="1"/>
        <end position="586"/>
    </location>
</feature>
<feature type="domain" description="FERM" evidence="7">
    <location>
        <begin position="2"/>
        <end position="296"/>
    </location>
</feature>
<feature type="region of interest" description="Interaction with SCYL3" evidence="9">
    <location>
        <begin position="244"/>
        <end position="586"/>
    </location>
</feature>
<feature type="region of interest" description="Disordered" evidence="8">
    <location>
        <begin position="306"/>
        <end position="341"/>
    </location>
</feature>
<feature type="region of interest" description="Disordered" evidence="8">
    <location>
        <begin position="485"/>
        <end position="564"/>
    </location>
</feature>
<feature type="coiled-coil region" evidence="6">
    <location>
        <begin position="302"/>
        <end position="462"/>
    </location>
</feature>
<feature type="short sequence motif" description="[IL]-x-C-x-x-[DE] motif" evidence="27">
    <location>
        <begin position="115"/>
        <end position="120"/>
    </location>
</feature>
<feature type="compositionally biased region" description="Basic and acidic residues" evidence="8">
    <location>
        <begin position="308"/>
        <end position="341"/>
    </location>
</feature>
<feature type="compositionally biased region" description="Basic and acidic residues" evidence="8">
    <location>
        <begin position="507"/>
        <end position="528"/>
    </location>
</feature>
<feature type="compositionally biased region" description="Polar residues" evidence="8">
    <location>
        <begin position="530"/>
        <end position="539"/>
    </location>
</feature>
<feature type="compositionally biased region" description="Basic and acidic residues" evidence="8">
    <location>
        <begin position="540"/>
        <end position="564"/>
    </location>
</feature>
<feature type="modified residue" description="N6-acetyllysine" evidence="29">
    <location>
        <position position="60"/>
    </location>
</feature>
<feature type="modified residue" description="Phosphotyrosine; by PDGFR" evidence="11 17">
    <location>
        <position position="146"/>
    </location>
</feature>
<feature type="modified residue" description="Phosphotyrosine; by PDGFR" evidence="11">
    <location>
        <position position="354"/>
    </location>
</feature>
<feature type="modified residue" description="Phosphoserine" evidence="30">
    <location>
        <position position="366"/>
    </location>
</feature>
<feature type="modified residue" description="Phosphotyrosine" evidence="17">
    <location>
        <position position="478"/>
    </location>
</feature>
<feature type="modified residue" description="Phosphoserine" evidence="2">
    <location>
        <position position="535"/>
    </location>
</feature>
<feature type="modified residue" description="Phosphothreonine; by ROCK2 and PKC/PRKCI" evidence="26">
    <location>
        <position position="567"/>
    </location>
</feature>
<feature type="sequence variant" id="VAR_030572" description="In dbSNP:rs3103004.">
    <original>R</original>
    <variation>C</variation>
    <location>
        <position position="180"/>
    </location>
</feature>
<feature type="sequence variant" id="VAR_030573" description="In dbSNP:rs2230143.">
    <original>A</original>
    <variation>P</variation>
    <location>
        <position position="494"/>
    </location>
</feature>
<feature type="sequence variant" id="VAR_015112" evidence="21 22">
    <original>L</original>
    <variation>V</variation>
    <location>
        <position position="532"/>
    </location>
</feature>
<feature type="strand" evidence="32">
    <location>
        <begin position="5"/>
        <end position="10"/>
    </location>
</feature>
<feature type="strand" evidence="32">
    <location>
        <begin position="15"/>
        <end position="20"/>
    </location>
</feature>
<feature type="helix" evidence="32">
    <location>
        <begin position="26"/>
        <end position="37"/>
    </location>
</feature>
<feature type="helix" evidence="32">
    <location>
        <begin position="42"/>
        <end position="44"/>
    </location>
</feature>
<feature type="strand" evidence="32">
    <location>
        <begin position="45"/>
        <end position="51"/>
    </location>
</feature>
<feature type="strand" evidence="32">
    <location>
        <begin position="56"/>
        <end position="58"/>
    </location>
</feature>
<feature type="strand" evidence="31">
    <location>
        <begin position="61"/>
        <end position="64"/>
    </location>
</feature>
<feature type="helix" evidence="32">
    <location>
        <begin position="65"/>
        <end position="67"/>
    </location>
</feature>
<feature type="strand" evidence="32">
    <location>
        <begin position="74"/>
        <end position="84"/>
    </location>
</feature>
<feature type="helix" evidence="32">
    <location>
        <begin position="89"/>
        <end position="92"/>
    </location>
</feature>
<feature type="helix" evidence="32">
    <location>
        <begin position="96"/>
        <end position="111"/>
    </location>
</feature>
<feature type="helix" evidence="32">
    <location>
        <begin position="119"/>
        <end position="134"/>
    </location>
</feature>
<feature type="turn" evidence="32">
    <location>
        <begin position="139"/>
        <end position="141"/>
    </location>
</feature>
<feature type="turn" evidence="32">
    <location>
        <begin position="144"/>
        <end position="149"/>
    </location>
</feature>
<feature type="helix" evidence="32">
    <location>
        <begin position="155"/>
        <end position="159"/>
    </location>
</feature>
<feature type="helix" evidence="32">
    <location>
        <begin position="165"/>
        <end position="178"/>
    </location>
</feature>
<feature type="turn" evidence="32">
    <location>
        <begin position="179"/>
        <end position="181"/>
    </location>
</feature>
<feature type="helix" evidence="32">
    <location>
        <begin position="184"/>
        <end position="196"/>
    </location>
</feature>
<feature type="turn" evidence="32">
    <location>
        <begin position="199"/>
        <end position="202"/>
    </location>
</feature>
<feature type="strand" evidence="32">
    <location>
        <begin position="204"/>
        <end position="210"/>
    </location>
</feature>
<feature type="strand" evidence="32">
    <location>
        <begin position="215"/>
        <end position="221"/>
    </location>
</feature>
<feature type="strand" evidence="32">
    <location>
        <begin position="224"/>
        <end position="229"/>
    </location>
</feature>
<feature type="strand" evidence="32">
    <location>
        <begin position="233"/>
        <end position="235"/>
    </location>
</feature>
<feature type="strand" evidence="32">
    <location>
        <begin position="237"/>
        <end position="241"/>
    </location>
</feature>
<feature type="helix" evidence="32">
    <location>
        <begin position="242"/>
        <end position="244"/>
    </location>
</feature>
<feature type="strand" evidence="32">
    <location>
        <begin position="245"/>
        <end position="251"/>
    </location>
</feature>
<feature type="strand" evidence="32">
    <location>
        <begin position="254"/>
        <end position="261"/>
    </location>
</feature>
<feature type="strand" evidence="32">
    <location>
        <begin position="267"/>
        <end position="270"/>
    </location>
</feature>
<feature type="helix" evidence="32">
    <location>
        <begin position="274"/>
        <end position="295"/>
    </location>
</feature>
<feature type="helix" evidence="31">
    <location>
        <begin position="520"/>
        <end position="523"/>
    </location>
</feature>
<feature type="helix" evidence="31">
    <location>
        <begin position="525"/>
        <end position="539"/>
    </location>
</feature>
<feature type="helix" evidence="31">
    <location>
        <begin position="544"/>
        <end position="546"/>
    </location>
</feature>
<feature type="helix" evidence="31">
    <location>
        <begin position="549"/>
        <end position="559"/>
    </location>
</feature>
<feature type="helix" evidence="31">
    <location>
        <begin position="564"/>
        <end position="571"/>
    </location>
</feature>
<feature type="helix" evidence="31">
    <location>
        <begin position="576"/>
        <end position="585"/>
    </location>
</feature>
<evidence type="ECO:0000250" key="1"/>
<evidence type="ECO:0000250" key="2">
    <source>
        <dbReference type="UniProtKB" id="P26040"/>
    </source>
</evidence>
<evidence type="ECO:0000250" key="3">
    <source>
        <dbReference type="UniProtKB" id="P31976"/>
    </source>
</evidence>
<evidence type="ECO:0000250" key="4">
    <source>
        <dbReference type="UniProtKB" id="P31977"/>
    </source>
</evidence>
<evidence type="ECO:0000250" key="5">
    <source>
        <dbReference type="UniProtKB" id="Q8HZQ5"/>
    </source>
</evidence>
<evidence type="ECO:0000255" key="6"/>
<evidence type="ECO:0000255" key="7">
    <source>
        <dbReference type="PROSITE-ProRule" id="PRU00084"/>
    </source>
</evidence>
<evidence type="ECO:0000256" key="8">
    <source>
        <dbReference type="SAM" id="MobiDB-lite"/>
    </source>
</evidence>
<evidence type="ECO:0000269" key="9">
    <source>
    </source>
</evidence>
<evidence type="ECO:0000269" key="10">
    <source>
    </source>
</evidence>
<evidence type="ECO:0000269" key="11">
    <source>
    </source>
</evidence>
<evidence type="ECO:0000269" key="12">
    <source>
    </source>
</evidence>
<evidence type="ECO:0000269" key="13">
    <source>
    </source>
</evidence>
<evidence type="ECO:0000269" key="14">
    <source>
    </source>
</evidence>
<evidence type="ECO:0000269" key="15">
    <source>
    </source>
</evidence>
<evidence type="ECO:0000269" key="16">
    <source>
    </source>
</evidence>
<evidence type="ECO:0000269" key="17">
    <source>
    </source>
</evidence>
<evidence type="ECO:0000269" key="18">
    <source>
    </source>
</evidence>
<evidence type="ECO:0000269" key="19">
    <source>
    </source>
</evidence>
<evidence type="ECO:0000269" key="20">
    <source>
    </source>
</evidence>
<evidence type="ECO:0000269" key="21">
    <source>
    </source>
</evidence>
<evidence type="ECO:0000269" key="22">
    <source>
    </source>
</evidence>
<evidence type="ECO:0000269" key="23">
    <source>
    </source>
</evidence>
<evidence type="ECO:0000269" key="24">
    <source>
    </source>
</evidence>
<evidence type="ECO:0000305" key="25"/>
<evidence type="ECO:0000305" key="26">
    <source>
    </source>
</evidence>
<evidence type="ECO:0000305" key="27">
    <source>
    </source>
</evidence>
<evidence type="ECO:0000305" key="28">
    <source>
    </source>
</evidence>
<evidence type="ECO:0007744" key="29">
    <source>
    </source>
</evidence>
<evidence type="ECO:0007744" key="30">
    <source>
    </source>
</evidence>
<evidence type="ECO:0007829" key="31">
    <source>
        <dbReference type="PDB" id="4RM8"/>
    </source>
</evidence>
<evidence type="ECO:0007829" key="32">
    <source>
        <dbReference type="PDB" id="4RMA"/>
    </source>
</evidence>
<protein>
    <recommendedName>
        <fullName>Ezrin</fullName>
    </recommendedName>
    <alternativeName>
        <fullName>Cytovillin</fullName>
    </alternativeName>
    <alternativeName>
        <fullName>Villin-2</fullName>
    </alternativeName>
    <alternativeName>
        <fullName>p81</fullName>
    </alternativeName>
</protein>
<name>EZRI_HUMAN</name>